<accession>Q8NX92</accession>
<proteinExistence type="inferred from homology"/>
<comment type="function">
    <text evidence="1">Part of the phosphoribosylformylglycinamidine synthase complex involved in the purines biosynthetic pathway. Catalyzes the ATP-dependent conversion of formylglycinamide ribonucleotide (FGAR) and glutamine to yield formylglycinamidine ribonucleotide (FGAM) and glutamate. The FGAM synthase complex is composed of three subunits. PurQ produces an ammonia molecule by converting glutamine to glutamate. PurL transfers the ammonia molecule to FGAR to form FGAM in an ATP-dependent manner. PurS interacts with PurQ and PurL and is thought to assist in the transfer of the ammonia molecule from PurQ to PurL.</text>
</comment>
<comment type="catalytic activity">
    <reaction evidence="1">
        <text>N(2)-formyl-N(1)-(5-phospho-beta-D-ribosyl)glycinamide + L-glutamine + ATP + H2O = 2-formamido-N(1)-(5-O-phospho-beta-D-ribosyl)acetamidine + L-glutamate + ADP + phosphate + H(+)</text>
        <dbReference type="Rhea" id="RHEA:17129"/>
        <dbReference type="ChEBI" id="CHEBI:15377"/>
        <dbReference type="ChEBI" id="CHEBI:15378"/>
        <dbReference type="ChEBI" id="CHEBI:29985"/>
        <dbReference type="ChEBI" id="CHEBI:30616"/>
        <dbReference type="ChEBI" id="CHEBI:43474"/>
        <dbReference type="ChEBI" id="CHEBI:58359"/>
        <dbReference type="ChEBI" id="CHEBI:147286"/>
        <dbReference type="ChEBI" id="CHEBI:147287"/>
        <dbReference type="ChEBI" id="CHEBI:456216"/>
        <dbReference type="EC" id="6.3.5.3"/>
    </reaction>
</comment>
<comment type="pathway">
    <text evidence="1">Purine metabolism; IMP biosynthesis via de novo pathway; 5-amino-1-(5-phospho-D-ribosyl)imidazole from N(2)-formyl-N(1)-(5-phospho-D-ribosyl)glycinamide: step 1/2.</text>
</comment>
<comment type="subunit">
    <text evidence="1">Monomer. Part of the FGAM synthase complex composed of 1 PurL, 1 PurQ and 2 PurS subunits.</text>
</comment>
<comment type="subcellular location">
    <subcellularLocation>
        <location evidence="1">Cytoplasm</location>
    </subcellularLocation>
</comment>
<comment type="similarity">
    <text evidence="1">Belongs to the FGAMS family.</text>
</comment>
<evidence type="ECO:0000255" key="1">
    <source>
        <dbReference type="HAMAP-Rule" id="MF_00420"/>
    </source>
</evidence>
<name>PURL_STAAW</name>
<keyword id="KW-0067">ATP-binding</keyword>
<keyword id="KW-0963">Cytoplasm</keyword>
<keyword id="KW-0436">Ligase</keyword>
<keyword id="KW-0460">Magnesium</keyword>
<keyword id="KW-0479">Metal-binding</keyword>
<keyword id="KW-0547">Nucleotide-binding</keyword>
<keyword id="KW-0658">Purine biosynthesis</keyword>
<organism>
    <name type="scientific">Staphylococcus aureus (strain MW2)</name>
    <dbReference type="NCBI Taxonomy" id="196620"/>
    <lineage>
        <taxon>Bacteria</taxon>
        <taxon>Bacillati</taxon>
        <taxon>Bacillota</taxon>
        <taxon>Bacilli</taxon>
        <taxon>Bacillales</taxon>
        <taxon>Staphylococcaceae</taxon>
        <taxon>Staphylococcus</taxon>
    </lineage>
</organism>
<feature type="chain" id="PRO_0000100490" description="Phosphoribosylformylglycinamidine synthase subunit PurL">
    <location>
        <begin position="1"/>
        <end position="729"/>
    </location>
</feature>
<feature type="active site" evidence="1">
    <location>
        <position position="54"/>
    </location>
</feature>
<feature type="active site" description="Proton acceptor" evidence="1">
    <location>
        <position position="100"/>
    </location>
</feature>
<feature type="binding site" evidence="1">
    <location>
        <position position="57"/>
    </location>
    <ligand>
        <name>ATP</name>
        <dbReference type="ChEBI" id="CHEBI:30616"/>
    </ligand>
</feature>
<feature type="binding site" evidence="1">
    <location>
        <position position="96"/>
    </location>
    <ligand>
        <name>ATP</name>
        <dbReference type="ChEBI" id="CHEBI:30616"/>
    </ligand>
</feature>
<feature type="binding site" evidence="1">
    <location>
        <position position="98"/>
    </location>
    <ligand>
        <name>Mg(2+)</name>
        <dbReference type="ChEBI" id="CHEBI:18420"/>
        <label>1</label>
    </ligand>
</feature>
<feature type="binding site" evidence="1">
    <location>
        <begin position="99"/>
        <end position="102"/>
    </location>
    <ligand>
        <name>substrate</name>
    </ligand>
</feature>
<feature type="binding site" evidence="1">
    <location>
        <position position="121"/>
    </location>
    <ligand>
        <name>substrate</name>
    </ligand>
</feature>
<feature type="binding site" evidence="1">
    <location>
        <position position="122"/>
    </location>
    <ligand>
        <name>Mg(2+)</name>
        <dbReference type="ChEBI" id="CHEBI:18420"/>
        <label>2</label>
    </ligand>
</feature>
<feature type="binding site" evidence="1">
    <location>
        <position position="245"/>
    </location>
    <ligand>
        <name>substrate</name>
    </ligand>
</feature>
<feature type="binding site" evidence="1">
    <location>
        <position position="273"/>
    </location>
    <ligand>
        <name>Mg(2+)</name>
        <dbReference type="ChEBI" id="CHEBI:18420"/>
        <label>2</label>
    </ligand>
</feature>
<feature type="binding site" evidence="1">
    <location>
        <begin position="317"/>
        <end position="319"/>
    </location>
    <ligand>
        <name>substrate</name>
    </ligand>
</feature>
<feature type="binding site" evidence="1">
    <location>
        <position position="495"/>
    </location>
    <ligand>
        <name>ATP</name>
        <dbReference type="ChEBI" id="CHEBI:30616"/>
    </ligand>
</feature>
<feature type="binding site" evidence="1">
    <location>
        <position position="532"/>
    </location>
    <ligand>
        <name>ATP</name>
        <dbReference type="ChEBI" id="CHEBI:30616"/>
    </ligand>
</feature>
<feature type="binding site" evidence="1">
    <location>
        <position position="533"/>
    </location>
    <ligand>
        <name>Mg(2+)</name>
        <dbReference type="ChEBI" id="CHEBI:18420"/>
        <label>1</label>
    </ligand>
</feature>
<feature type="binding site" evidence="1">
    <location>
        <position position="535"/>
    </location>
    <ligand>
        <name>substrate</name>
    </ligand>
</feature>
<sequence>MSKFIEPSVEEIKLEKVYQDMGLSDQEYEKVCDILGRQPNFTETGIFSVMWSEHCSYKHSKPFLKQFPTSGDHVLMGPGEGAGVVDIGDNQAVVFKVESHNHPSAIEPYQGAATGVGGIIRDIVSIGARPINLLNSLRFGELDNKQNQRLLKGVVKGIGGYGNCIGIPTTAGEIEFDERYDGNPLVNAMCVGVINHDMIQKGTAKGVGNSVIYVGLKTGRDGIHGATFASEELTEESESKRPSVQIGDPFVGKKLMEATLEAITFDELVGIQDMGAAGLTSSSSEMAAKGGSGLHLRLEQVPTREPGISPYEMMLSETQERMLLVVEKGTEQKFLDLFDKHELDSAVIGEVTDTNRFVLTYDDEVYADIPVEPLADEAPVYILEGEEKDYNTSKNDYTHIDVKDTFFKLLKHPTIASKHYLYDQYDQQVGANTIIKPGLQASVVRVEGTNKAIASTIDGEARYVYNNPYEGGKMVVAEAYRNLIAVGATPLAMTDCLNYGSPEKKEIYQQLIDSTKGMAEACDILKTPVVSGNVSLYNETKGTSIFPTPVVGMVGLIENVNYLNDFEPQVGDKLYLIGDTKDDFGGSQLEKLIYGKVNHEFESLDLSSEVEKGESIKTAIREGLLSHVQTVGKGGLLITLAKLSAHYGLGLKSSIDITNAQLFSETQGRYVVSVKSGKTLNIDNAIEIGLLTDSDNFKVTTPYTEISENVSDIKQIWEGAIAQCLTTQD</sequence>
<gene>
    <name evidence="1" type="primary">purL</name>
    <name type="ordered locus">MW0952</name>
</gene>
<reference key="1">
    <citation type="journal article" date="2002" name="Lancet">
        <title>Genome and virulence determinants of high virulence community-acquired MRSA.</title>
        <authorList>
            <person name="Baba T."/>
            <person name="Takeuchi F."/>
            <person name="Kuroda M."/>
            <person name="Yuzawa H."/>
            <person name="Aoki K."/>
            <person name="Oguchi A."/>
            <person name="Nagai Y."/>
            <person name="Iwama N."/>
            <person name="Asano K."/>
            <person name="Naimi T."/>
            <person name="Kuroda H."/>
            <person name="Cui L."/>
            <person name="Yamamoto K."/>
            <person name="Hiramatsu K."/>
        </authorList>
    </citation>
    <scope>NUCLEOTIDE SEQUENCE [LARGE SCALE GENOMIC DNA]</scope>
    <source>
        <strain>MW2</strain>
    </source>
</reference>
<protein>
    <recommendedName>
        <fullName evidence="1">Phosphoribosylformylglycinamidine synthase subunit PurL</fullName>
        <shortName evidence="1">FGAM synthase</shortName>
        <ecNumber evidence="1">6.3.5.3</ecNumber>
    </recommendedName>
    <alternativeName>
        <fullName evidence="1">Formylglycinamide ribonucleotide amidotransferase subunit II</fullName>
        <shortName evidence="1">FGAR amidotransferase II</shortName>
        <shortName evidence="1">FGAR-AT II</shortName>
    </alternativeName>
    <alternativeName>
        <fullName evidence="1">Glutamine amidotransferase PurL</fullName>
    </alternativeName>
    <alternativeName>
        <fullName evidence="1">Phosphoribosylformylglycinamidine synthase subunit II</fullName>
    </alternativeName>
</protein>
<dbReference type="EC" id="6.3.5.3" evidence="1"/>
<dbReference type="EMBL" id="BA000033">
    <property type="protein sequence ID" value="BAB94817.1"/>
    <property type="molecule type" value="Genomic_DNA"/>
</dbReference>
<dbReference type="RefSeq" id="WP_000032727.1">
    <property type="nucleotide sequence ID" value="NC_003923.1"/>
</dbReference>
<dbReference type="SMR" id="Q8NX92"/>
<dbReference type="KEGG" id="sam:MW0952"/>
<dbReference type="HOGENOM" id="CLU_003100_0_1_9"/>
<dbReference type="UniPathway" id="UPA00074">
    <property type="reaction ID" value="UER00128"/>
</dbReference>
<dbReference type="GO" id="GO:0005737">
    <property type="term" value="C:cytoplasm"/>
    <property type="evidence" value="ECO:0007669"/>
    <property type="project" value="UniProtKB-SubCell"/>
</dbReference>
<dbReference type="GO" id="GO:0005524">
    <property type="term" value="F:ATP binding"/>
    <property type="evidence" value="ECO:0007669"/>
    <property type="project" value="UniProtKB-UniRule"/>
</dbReference>
<dbReference type="GO" id="GO:0000287">
    <property type="term" value="F:magnesium ion binding"/>
    <property type="evidence" value="ECO:0007669"/>
    <property type="project" value="UniProtKB-UniRule"/>
</dbReference>
<dbReference type="GO" id="GO:0004642">
    <property type="term" value="F:phosphoribosylformylglycinamidine synthase activity"/>
    <property type="evidence" value="ECO:0007669"/>
    <property type="project" value="UniProtKB-UniRule"/>
</dbReference>
<dbReference type="GO" id="GO:0006189">
    <property type="term" value="P:'de novo' IMP biosynthetic process"/>
    <property type="evidence" value="ECO:0007669"/>
    <property type="project" value="UniProtKB-UniRule"/>
</dbReference>
<dbReference type="CDD" id="cd02203">
    <property type="entry name" value="PurL_repeat1"/>
    <property type="match status" value="1"/>
</dbReference>
<dbReference type="CDD" id="cd02204">
    <property type="entry name" value="PurL_repeat2"/>
    <property type="match status" value="1"/>
</dbReference>
<dbReference type="FunFam" id="3.30.1330.10:FF:000004">
    <property type="entry name" value="Phosphoribosylformylglycinamidine synthase subunit PurL"/>
    <property type="match status" value="1"/>
</dbReference>
<dbReference type="Gene3D" id="3.90.650.10">
    <property type="entry name" value="PurM-like C-terminal domain"/>
    <property type="match status" value="2"/>
</dbReference>
<dbReference type="Gene3D" id="3.30.1330.10">
    <property type="entry name" value="PurM-like, N-terminal domain"/>
    <property type="match status" value="2"/>
</dbReference>
<dbReference type="HAMAP" id="MF_00420">
    <property type="entry name" value="PurL_2"/>
    <property type="match status" value="1"/>
</dbReference>
<dbReference type="InterPro" id="IPR010074">
    <property type="entry name" value="PRibForGlyAmidine_synth_PurL"/>
</dbReference>
<dbReference type="InterPro" id="IPR041609">
    <property type="entry name" value="PurL_linker"/>
</dbReference>
<dbReference type="InterPro" id="IPR010918">
    <property type="entry name" value="PurM-like_C_dom"/>
</dbReference>
<dbReference type="InterPro" id="IPR036676">
    <property type="entry name" value="PurM-like_C_sf"/>
</dbReference>
<dbReference type="InterPro" id="IPR016188">
    <property type="entry name" value="PurM-like_N"/>
</dbReference>
<dbReference type="InterPro" id="IPR036921">
    <property type="entry name" value="PurM-like_N_sf"/>
</dbReference>
<dbReference type="NCBIfam" id="TIGR01736">
    <property type="entry name" value="FGAM_synth_II"/>
    <property type="match status" value="1"/>
</dbReference>
<dbReference type="NCBIfam" id="NF002290">
    <property type="entry name" value="PRK01213.1"/>
    <property type="match status" value="1"/>
</dbReference>
<dbReference type="PANTHER" id="PTHR43555">
    <property type="entry name" value="PHOSPHORIBOSYLFORMYLGLYCINAMIDINE SYNTHASE SUBUNIT PURL"/>
    <property type="match status" value="1"/>
</dbReference>
<dbReference type="PANTHER" id="PTHR43555:SF1">
    <property type="entry name" value="PHOSPHORIBOSYLFORMYLGLYCINAMIDINE SYNTHASE SUBUNIT PURL"/>
    <property type="match status" value="1"/>
</dbReference>
<dbReference type="Pfam" id="PF00586">
    <property type="entry name" value="AIRS"/>
    <property type="match status" value="2"/>
</dbReference>
<dbReference type="Pfam" id="PF02769">
    <property type="entry name" value="AIRS_C"/>
    <property type="match status" value="1"/>
</dbReference>
<dbReference type="Pfam" id="PF18072">
    <property type="entry name" value="FGAR-AT_linker"/>
    <property type="match status" value="1"/>
</dbReference>
<dbReference type="PIRSF" id="PIRSF001587">
    <property type="entry name" value="FGAM_synthase_II"/>
    <property type="match status" value="1"/>
</dbReference>
<dbReference type="SUPFAM" id="SSF56042">
    <property type="entry name" value="PurM C-terminal domain-like"/>
    <property type="match status" value="2"/>
</dbReference>
<dbReference type="SUPFAM" id="SSF55326">
    <property type="entry name" value="PurM N-terminal domain-like"/>
    <property type="match status" value="2"/>
</dbReference>